<accession>Q5PE39</accession>
<proteinExistence type="inferred from homology"/>
<evidence type="ECO:0000255" key="1">
    <source>
        <dbReference type="HAMAP-Rule" id="MF_00646"/>
    </source>
</evidence>
<evidence type="ECO:0000305" key="2"/>
<reference key="1">
    <citation type="journal article" date="2004" name="Nat. Genet.">
        <title>Comparison of genome degradation in Paratyphi A and Typhi, human-restricted serovars of Salmonella enterica that cause typhoid.</title>
        <authorList>
            <person name="McClelland M."/>
            <person name="Sanderson K.E."/>
            <person name="Clifton S.W."/>
            <person name="Latreille P."/>
            <person name="Porwollik S."/>
            <person name="Sabo A."/>
            <person name="Meyer R."/>
            <person name="Bieri T."/>
            <person name="Ozersky P."/>
            <person name="McLellan M."/>
            <person name="Harkins C.R."/>
            <person name="Wang C."/>
            <person name="Nguyen C."/>
            <person name="Berghoff A."/>
            <person name="Elliott G."/>
            <person name="Kohlberg S."/>
            <person name="Strong C."/>
            <person name="Du F."/>
            <person name="Carter J."/>
            <person name="Kremizki C."/>
            <person name="Layman D."/>
            <person name="Leonard S."/>
            <person name="Sun H."/>
            <person name="Fulton L."/>
            <person name="Nash W."/>
            <person name="Miner T."/>
            <person name="Minx P."/>
            <person name="Delehaunty K."/>
            <person name="Fronick C."/>
            <person name="Magrini V."/>
            <person name="Nhan M."/>
            <person name="Warren W."/>
            <person name="Florea L."/>
            <person name="Spieth J."/>
            <person name="Wilson R.K."/>
        </authorList>
    </citation>
    <scope>NUCLEOTIDE SEQUENCE [LARGE SCALE GENOMIC DNA]</scope>
    <source>
        <strain>ATCC 9150 / SARB42</strain>
    </source>
</reference>
<feature type="chain" id="PRO_0000094385" description="Elongation factor P-like protein">
    <location>
        <begin position="1"/>
        <end position="190"/>
    </location>
</feature>
<dbReference type="EMBL" id="CP000026">
    <property type="protein sequence ID" value="AAV76640.1"/>
    <property type="status" value="ALT_INIT"/>
    <property type="molecule type" value="Genomic_DNA"/>
</dbReference>
<dbReference type="RefSeq" id="WP_001136822.1">
    <property type="nucleotide sequence ID" value="NC_006511.1"/>
</dbReference>
<dbReference type="SMR" id="Q5PE39"/>
<dbReference type="GeneID" id="66756682"/>
<dbReference type="KEGG" id="spt:SPA0640"/>
<dbReference type="HOGENOM" id="CLU_074944_2_0_6"/>
<dbReference type="Proteomes" id="UP000008185">
    <property type="component" value="Chromosome"/>
</dbReference>
<dbReference type="GO" id="GO:0005829">
    <property type="term" value="C:cytosol"/>
    <property type="evidence" value="ECO:0007669"/>
    <property type="project" value="UniProtKB-ARBA"/>
</dbReference>
<dbReference type="GO" id="GO:0003746">
    <property type="term" value="F:translation elongation factor activity"/>
    <property type="evidence" value="ECO:0007669"/>
    <property type="project" value="UniProtKB-UniRule"/>
</dbReference>
<dbReference type="GO" id="GO:0043043">
    <property type="term" value="P:peptide biosynthetic process"/>
    <property type="evidence" value="ECO:0007669"/>
    <property type="project" value="InterPro"/>
</dbReference>
<dbReference type="CDD" id="cd04470">
    <property type="entry name" value="S1_EF-P_repeat_1"/>
    <property type="match status" value="1"/>
</dbReference>
<dbReference type="CDD" id="cd05794">
    <property type="entry name" value="S1_EF-P_repeat_2"/>
    <property type="match status" value="1"/>
</dbReference>
<dbReference type="FunFam" id="2.40.50.140:FF:000004">
    <property type="entry name" value="Elongation factor P"/>
    <property type="match status" value="1"/>
</dbReference>
<dbReference type="FunFam" id="2.30.30.30:FF:000011">
    <property type="entry name" value="Elongation factor P-like protein"/>
    <property type="match status" value="1"/>
</dbReference>
<dbReference type="FunFam" id="2.40.50.140:FF:000053">
    <property type="entry name" value="Elongation factor P-like protein"/>
    <property type="match status" value="1"/>
</dbReference>
<dbReference type="Gene3D" id="2.30.30.30">
    <property type="match status" value="1"/>
</dbReference>
<dbReference type="Gene3D" id="2.40.50.140">
    <property type="entry name" value="Nucleic acid-binding proteins"/>
    <property type="match status" value="2"/>
</dbReference>
<dbReference type="HAMAP" id="MF_00646">
    <property type="entry name" value="EFP"/>
    <property type="match status" value="1"/>
</dbReference>
<dbReference type="InterPro" id="IPR015365">
    <property type="entry name" value="Elong-fact-P_C"/>
</dbReference>
<dbReference type="InterPro" id="IPR012340">
    <property type="entry name" value="NA-bd_OB-fold"/>
</dbReference>
<dbReference type="InterPro" id="IPR014722">
    <property type="entry name" value="Rib_uL2_dom2"/>
</dbReference>
<dbReference type="InterPro" id="IPR020599">
    <property type="entry name" value="Transl_elong_fac_P/YeiP"/>
</dbReference>
<dbReference type="InterPro" id="IPR013185">
    <property type="entry name" value="Transl_elong_KOW-like"/>
</dbReference>
<dbReference type="InterPro" id="IPR011897">
    <property type="entry name" value="Transl_elong_p-like_YeiP"/>
</dbReference>
<dbReference type="InterPro" id="IPR001059">
    <property type="entry name" value="Transl_elong_P/YeiP_cen"/>
</dbReference>
<dbReference type="InterPro" id="IPR013852">
    <property type="entry name" value="Transl_elong_P/YeiP_CS"/>
</dbReference>
<dbReference type="InterPro" id="IPR008991">
    <property type="entry name" value="Translation_prot_SH3-like_sf"/>
</dbReference>
<dbReference type="NCBIfam" id="NF001810">
    <property type="entry name" value="PRK00529.1"/>
    <property type="match status" value="1"/>
</dbReference>
<dbReference type="NCBIfam" id="NF003392">
    <property type="entry name" value="PRK04542.1"/>
    <property type="match status" value="1"/>
</dbReference>
<dbReference type="NCBIfam" id="TIGR02178">
    <property type="entry name" value="yeiP"/>
    <property type="match status" value="1"/>
</dbReference>
<dbReference type="PANTHER" id="PTHR30053">
    <property type="entry name" value="ELONGATION FACTOR P"/>
    <property type="match status" value="1"/>
</dbReference>
<dbReference type="PANTHER" id="PTHR30053:SF14">
    <property type="entry name" value="TRANSLATION ELONGATION FACTOR KOW-LIKE DOMAIN-CONTAINING PROTEIN"/>
    <property type="match status" value="1"/>
</dbReference>
<dbReference type="Pfam" id="PF01132">
    <property type="entry name" value="EFP"/>
    <property type="match status" value="1"/>
</dbReference>
<dbReference type="Pfam" id="PF08207">
    <property type="entry name" value="EFP_N"/>
    <property type="match status" value="1"/>
</dbReference>
<dbReference type="Pfam" id="PF09285">
    <property type="entry name" value="Elong-fact-P_C"/>
    <property type="match status" value="1"/>
</dbReference>
<dbReference type="PIRSF" id="PIRSF005901">
    <property type="entry name" value="EF-P"/>
    <property type="match status" value="1"/>
</dbReference>
<dbReference type="SMART" id="SM01185">
    <property type="entry name" value="EFP"/>
    <property type="match status" value="1"/>
</dbReference>
<dbReference type="SMART" id="SM00841">
    <property type="entry name" value="Elong-fact-P_C"/>
    <property type="match status" value="1"/>
</dbReference>
<dbReference type="SUPFAM" id="SSF50249">
    <property type="entry name" value="Nucleic acid-binding proteins"/>
    <property type="match status" value="2"/>
</dbReference>
<dbReference type="SUPFAM" id="SSF50104">
    <property type="entry name" value="Translation proteins SH3-like domain"/>
    <property type="match status" value="1"/>
</dbReference>
<dbReference type="PROSITE" id="PS01275">
    <property type="entry name" value="EFP"/>
    <property type="match status" value="1"/>
</dbReference>
<gene>
    <name evidence="1" type="primary">yeiP</name>
    <name type="ordered locus">SPA0640</name>
</gene>
<name>EFPL_SALPA</name>
<organism>
    <name type="scientific">Salmonella paratyphi A (strain ATCC 9150 / SARB42)</name>
    <dbReference type="NCBI Taxonomy" id="295319"/>
    <lineage>
        <taxon>Bacteria</taxon>
        <taxon>Pseudomonadati</taxon>
        <taxon>Pseudomonadota</taxon>
        <taxon>Gammaproteobacteria</taxon>
        <taxon>Enterobacterales</taxon>
        <taxon>Enterobacteriaceae</taxon>
        <taxon>Salmonella</taxon>
    </lineage>
</organism>
<protein>
    <recommendedName>
        <fullName evidence="1">Elongation factor P-like protein</fullName>
    </recommendedName>
</protein>
<sequence>MPRANEIKKGMVLNYNGKLLIVKDIDIQSPTARGAATLYKMRFSDVRTGLKVEERFKGDDIVDTVTLSRRGVDFSYVDGNEYVFMDKEDYTPYTFTKDQIEEELLFMPEGGMPDMQVLTWDGQLLALELPQTVDLEIVETAPGIKGASASARNKPATLSTGLVIQVPEYLSAGEKIRIHIEERRYMGRAD</sequence>
<comment type="similarity">
    <text evidence="1">Belongs to the elongation factor P family.</text>
</comment>
<comment type="sequence caution" evidence="2">
    <conflict type="erroneous initiation">
        <sequence resource="EMBL-CDS" id="AAV76640"/>
    </conflict>
</comment>